<organism>
    <name type="scientific">Prochlorococcus marinus (strain MIT 9211)</name>
    <dbReference type="NCBI Taxonomy" id="93059"/>
    <lineage>
        <taxon>Bacteria</taxon>
        <taxon>Bacillati</taxon>
        <taxon>Cyanobacteriota</taxon>
        <taxon>Cyanophyceae</taxon>
        <taxon>Synechococcales</taxon>
        <taxon>Prochlorococcaceae</taxon>
        <taxon>Prochlorococcus</taxon>
    </lineage>
</organism>
<evidence type="ECO:0000255" key="1">
    <source>
        <dbReference type="HAMAP-Rule" id="MF_00353"/>
    </source>
</evidence>
<proteinExistence type="inferred from homology"/>
<reference key="1">
    <citation type="journal article" date="2007" name="PLoS Genet.">
        <title>Patterns and implications of gene gain and loss in the evolution of Prochlorococcus.</title>
        <authorList>
            <person name="Kettler G.C."/>
            <person name="Martiny A.C."/>
            <person name="Huang K."/>
            <person name="Zucker J."/>
            <person name="Coleman M.L."/>
            <person name="Rodrigue S."/>
            <person name="Chen F."/>
            <person name="Lapidus A."/>
            <person name="Ferriera S."/>
            <person name="Johnson J."/>
            <person name="Steglich C."/>
            <person name="Church G.M."/>
            <person name="Richardson P."/>
            <person name="Chisholm S.W."/>
        </authorList>
    </citation>
    <scope>NUCLEOTIDE SEQUENCE [LARGE SCALE GENOMIC DNA]</scope>
    <source>
        <strain>MIT 9211</strain>
    </source>
</reference>
<dbReference type="EC" id="1.3.7.7" evidence="1"/>
<dbReference type="EMBL" id="CP000878">
    <property type="protein sequence ID" value="ABX08477.1"/>
    <property type="molecule type" value="Genomic_DNA"/>
</dbReference>
<dbReference type="RefSeq" id="WP_012195100.1">
    <property type="nucleotide sequence ID" value="NC_009976.1"/>
</dbReference>
<dbReference type="SMR" id="A9BEG7"/>
<dbReference type="STRING" id="93059.P9211_05461"/>
<dbReference type="KEGG" id="pmj:P9211_05461"/>
<dbReference type="eggNOG" id="COG2710">
    <property type="taxonomic scope" value="Bacteria"/>
</dbReference>
<dbReference type="HOGENOM" id="CLU_025470_0_0_3"/>
<dbReference type="OrthoDB" id="5717231at2"/>
<dbReference type="UniPathway" id="UPA00670"/>
<dbReference type="Proteomes" id="UP000000788">
    <property type="component" value="Chromosome"/>
</dbReference>
<dbReference type="GO" id="GO:0051539">
    <property type="term" value="F:4 iron, 4 sulfur cluster binding"/>
    <property type="evidence" value="ECO:0007669"/>
    <property type="project" value="UniProtKB-UniRule"/>
</dbReference>
<dbReference type="GO" id="GO:0005524">
    <property type="term" value="F:ATP binding"/>
    <property type="evidence" value="ECO:0007669"/>
    <property type="project" value="UniProtKB-UniRule"/>
</dbReference>
<dbReference type="GO" id="GO:0046872">
    <property type="term" value="F:metal ion binding"/>
    <property type="evidence" value="ECO:0007669"/>
    <property type="project" value="UniProtKB-KW"/>
</dbReference>
<dbReference type="GO" id="GO:0016730">
    <property type="term" value="F:oxidoreductase activity, acting on iron-sulfur proteins as donors"/>
    <property type="evidence" value="ECO:0007669"/>
    <property type="project" value="InterPro"/>
</dbReference>
<dbReference type="GO" id="GO:0016636">
    <property type="term" value="F:oxidoreductase activity, acting on the CH-CH group of donors, iron-sulfur protein as acceptor"/>
    <property type="evidence" value="ECO:0007669"/>
    <property type="project" value="UniProtKB-UniRule"/>
</dbReference>
<dbReference type="GO" id="GO:0036068">
    <property type="term" value="P:light-independent chlorophyll biosynthetic process"/>
    <property type="evidence" value="ECO:0007669"/>
    <property type="project" value="UniProtKB-UniRule"/>
</dbReference>
<dbReference type="GO" id="GO:0019685">
    <property type="term" value="P:photosynthesis, dark reaction"/>
    <property type="evidence" value="ECO:0007669"/>
    <property type="project" value="InterPro"/>
</dbReference>
<dbReference type="Gene3D" id="1.20.89.20">
    <property type="match status" value="1"/>
</dbReference>
<dbReference type="Gene3D" id="3.40.50.1980">
    <property type="entry name" value="Nitrogenase molybdenum iron protein domain"/>
    <property type="match status" value="3"/>
</dbReference>
<dbReference type="Gene3D" id="1.10.8.550">
    <property type="entry name" value="Proto-chlorophyllide reductase 57 kD subunit B"/>
    <property type="match status" value="1"/>
</dbReference>
<dbReference type="HAMAP" id="MF_00353">
    <property type="entry name" value="ChlB_BchB"/>
    <property type="match status" value="1"/>
</dbReference>
<dbReference type="InterPro" id="IPR050152">
    <property type="entry name" value="ChlB/BchB/BchZ"/>
</dbReference>
<dbReference type="InterPro" id="IPR013580">
    <property type="entry name" value="LI-POR_suB-like_C"/>
</dbReference>
<dbReference type="InterPro" id="IPR000510">
    <property type="entry name" value="Nase/OxRdtase_comp1"/>
</dbReference>
<dbReference type="InterPro" id="IPR042298">
    <property type="entry name" value="P-CP_red_C"/>
</dbReference>
<dbReference type="InterPro" id="IPR005969">
    <property type="entry name" value="Protochl_reductB"/>
</dbReference>
<dbReference type="InterPro" id="IPR016209">
    <property type="entry name" value="Protochlorophyllide_Rdtase"/>
</dbReference>
<dbReference type="NCBIfam" id="TIGR01278">
    <property type="entry name" value="DPOR_BchB"/>
    <property type="match status" value="1"/>
</dbReference>
<dbReference type="NCBIfam" id="NF002790">
    <property type="entry name" value="PRK02910.1-4"/>
    <property type="match status" value="1"/>
</dbReference>
<dbReference type="PANTHER" id="PTHR33712">
    <property type="entry name" value="LIGHT-INDEPENDENT PROTOCHLOROPHYLLIDE REDUCTASE SUBUNIT B"/>
    <property type="match status" value="1"/>
</dbReference>
<dbReference type="PANTHER" id="PTHR33712:SF7">
    <property type="entry name" value="LIGHT-INDEPENDENT PROTOCHLOROPHYLLIDE REDUCTASE SUBUNIT B"/>
    <property type="match status" value="1"/>
</dbReference>
<dbReference type="Pfam" id="PF00148">
    <property type="entry name" value="Oxidored_nitro"/>
    <property type="match status" value="1"/>
</dbReference>
<dbReference type="Pfam" id="PF08369">
    <property type="entry name" value="PCP_red"/>
    <property type="match status" value="1"/>
</dbReference>
<dbReference type="PIRSF" id="PIRSF000163">
    <property type="entry name" value="PCP_ChlB"/>
    <property type="match status" value="1"/>
</dbReference>
<dbReference type="SUPFAM" id="SSF53807">
    <property type="entry name" value="Helical backbone' metal receptor"/>
    <property type="match status" value="1"/>
</dbReference>
<sequence>MELTLWTYEGPPHIGAMRIASSMKGVHYVLHAPQGDTYADLLFTMIERRGQRPPVTYTTFQARDLGGDTAELVKGHIREAVDRFKPEALLVGESCTAELIQDQPGSLAKGMGYEIPIISLELPAYSKKENWGAAETFYQLVRGLLKDSPKSESEHNPSKWKTEGRRPRVNLLGPSLLGFRCRDDVLEVQKILAHHGIDINVVAPLGAAPADIIRINEADANICLYPEIAESTCIWLERNFGHPYTKTIPIGVGATNDFLNEIHQLLGMELPKQEEEDGSQSRLTWYSKSVDSNYLTGKRVFIFGDGTHVLAASRIAHKELGFEVVGLGTYSREMARKVRDAAKELGLEALITNDYLAVEEAIKESAPELVLGTQMERHSAKRLGIPCAVISTPMHVQDVPARYSPQMGWEGANVIFDDWVHPLMMGLEEHLIGMFRHDFEFTDGHQSHLGHLGGHSTEKETKAPSFYQEKVQSSRPEHFPHWTPEGESELAKIPFFVRGKVRKNTEKYANQIGCKEIDGETLLDAKAHFNA</sequence>
<name>CHLB_PROM4</name>
<gene>
    <name evidence="1" type="primary">chlB</name>
    <name type="ordered locus">P9211_05461</name>
</gene>
<protein>
    <recommendedName>
        <fullName evidence="1">Light-independent protochlorophyllide reductase subunit B</fullName>
        <shortName evidence="1">DPOR subunit B</shortName>
        <shortName evidence="1">LI-POR subunit B</shortName>
        <ecNumber evidence="1">1.3.7.7</ecNumber>
    </recommendedName>
</protein>
<keyword id="KW-0004">4Fe-4S</keyword>
<keyword id="KW-0067">ATP-binding</keyword>
<keyword id="KW-0149">Chlorophyll biosynthesis</keyword>
<keyword id="KW-0408">Iron</keyword>
<keyword id="KW-0411">Iron-sulfur</keyword>
<keyword id="KW-0479">Metal-binding</keyword>
<keyword id="KW-0547">Nucleotide-binding</keyword>
<keyword id="KW-0560">Oxidoreductase</keyword>
<keyword id="KW-0602">Photosynthesis</keyword>
<keyword id="KW-1185">Reference proteome</keyword>
<accession>A9BEG7</accession>
<feature type="chain" id="PRO_1000120534" description="Light-independent protochlorophyllide reductase subunit B">
    <location>
        <begin position="1"/>
        <end position="531"/>
    </location>
</feature>
<feature type="active site" description="Proton donor" evidence="1">
    <location>
        <position position="291"/>
    </location>
</feature>
<feature type="binding site" evidence="1">
    <location>
        <position position="36"/>
    </location>
    <ligand>
        <name>[4Fe-4S] cluster</name>
        <dbReference type="ChEBI" id="CHEBI:49883"/>
        <note>ligand shared with heterodimeric partner</note>
    </ligand>
</feature>
<feature type="binding site" evidence="1">
    <location>
        <begin position="426"/>
        <end position="427"/>
    </location>
    <ligand>
        <name>substrate</name>
    </ligand>
</feature>
<comment type="function">
    <text evidence="1">Component of the dark-operative protochlorophyllide reductase (DPOR) that uses Mg-ATP and reduced ferredoxin to reduce ring D of protochlorophyllide (Pchlide) to form chlorophyllide a (Chlide). This reaction is light-independent. The NB-protein (ChlN-ChlB) is the catalytic component of the complex.</text>
</comment>
<comment type="catalytic activity">
    <reaction evidence="1">
        <text>chlorophyllide a + oxidized 2[4Fe-4S]-[ferredoxin] + 2 ADP + 2 phosphate = protochlorophyllide a + reduced 2[4Fe-4S]-[ferredoxin] + 2 ATP + 2 H2O</text>
        <dbReference type="Rhea" id="RHEA:28202"/>
        <dbReference type="Rhea" id="RHEA-COMP:10002"/>
        <dbReference type="Rhea" id="RHEA-COMP:10004"/>
        <dbReference type="ChEBI" id="CHEBI:15377"/>
        <dbReference type="ChEBI" id="CHEBI:30616"/>
        <dbReference type="ChEBI" id="CHEBI:33722"/>
        <dbReference type="ChEBI" id="CHEBI:33723"/>
        <dbReference type="ChEBI" id="CHEBI:43474"/>
        <dbReference type="ChEBI" id="CHEBI:83348"/>
        <dbReference type="ChEBI" id="CHEBI:83350"/>
        <dbReference type="ChEBI" id="CHEBI:456216"/>
        <dbReference type="EC" id="1.3.7.7"/>
    </reaction>
</comment>
<comment type="cofactor">
    <cofactor evidence="1">
        <name>[4Fe-4S] cluster</name>
        <dbReference type="ChEBI" id="CHEBI:49883"/>
    </cofactor>
    <text evidence="1">Binds 1 [4Fe-4S] cluster per heterodimer. The cluster is bound at the heterodimer interface by residues from both subunits.</text>
</comment>
<comment type="pathway">
    <text evidence="1">Porphyrin-containing compound metabolism; chlorophyll biosynthesis (light-independent).</text>
</comment>
<comment type="subunit">
    <text evidence="1">Protochlorophyllide reductase is composed of three subunits; ChlL, ChlN and ChlB. Forms a heterotetramer of two ChlB and two ChlN subunits.</text>
</comment>
<comment type="similarity">
    <text evidence="1">Belongs to the ChlB/BchB/BchZ family.</text>
</comment>